<proteinExistence type="inferred from homology"/>
<organism>
    <name type="scientific">Burkholderia mallei (strain ATCC 23344)</name>
    <dbReference type="NCBI Taxonomy" id="243160"/>
    <lineage>
        <taxon>Bacteria</taxon>
        <taxon>Pseudomonadati</taxon>
        <taxon>Pseudomonadota</taxon>
        <taxon>Betaproteobacteria</taxon>
        <taxon>Burkholderiales</taxon>
        <taxon>Burkholderiaceae</taxon>
        <taxon>Burkholderia</taxon>
        <taxon>pseudomallei group</taxon>
    </lineage>
</organism>
<evidence type="ECO:0000255" key="1">
    <source>
        <dbReference type="HAMAP-Rule" id="MF_00183"/>
    </source>
</evidence>
<dbReference type="EC" id="1.1.1.267" evidence="1"/>
<dbReference type="EMBL" id="CP000010">
    <property type="protein sequence ID" value="AAU47749.1"/>
    <property type="molecule type" value="Genomic_DNA"/>
</dbReference>
<dbReference type="RefSeq" id="WP_004193915.1">
    <property type="nucleotide sequence ID" value="NC_006348.1"/>
</dbReference>
<dbReference type="RefSeq" id="YP_103189.1">
    <property type="nucleotide sequence ID" value="NC_006348.1"/>
</dbReference>
<dbReference type="SMR" id="Q62JD0"/>
<dbReference type="KEGG" id="bma:BMA1549"/>
<dbReference type="PATRIC" id="fig|243160.12.peg.1594"/>
<dbReference type="eggNOG" id="COG0743">
    <property type="taxonomic scope" value="Bacteria"/>
</dbReference>
<dbReference type="HOGENOM" id="CLU_035714_4_0_4"/>
<dbReference type="UniPathway" id="UPA00056">
    <property type="reaction ID" value="UER00092"/>
</dbReference>
<dbReference type="Proteomes" id="UP000006693">
    <property type="component" value="Chromosome 1"/>
</dbReference>
<dbReference type="GO" id="GO:0030604">
    <property type="term" value="F:1-deoxy-D-xylulose-5-phosphate reductoisomerase activity"/>
    <property type="evidence" value="ECO:0007669"/>
    <property type="project" value="UniProtKB-UniRule"/>
</dbReference>
<dbReference type="GO" id="GO:0030145">
    <property type="term" value="F:manganese ion binding"/>
    <property type="evidence" value="ECO:0007669"/>
    <property type="project" value="TreeGrafter"/>
</dbReference>
<dbReference type="GO" id="GO:0070402">
    <property type="term" value="F:NADPH binding"/>
    <property type="evidence" value="ECO:0007669"/>
    <property type="project" value="InterPro"/>
</dbReference>
<dbReference type="GO" id="GO:0051484">
    <property type="term" value="P:isopentenyl diphosphate biosynthetic process, methylerythritol 4-phosphate pathway involved in terpenoid biosynthetic process"/>
    <property type="evidence" value="ECO:0007669"/>
    <property type="project" value="TreeGrafter"/>
</dbReference>
<dbReference type="FunFam" id="1.10.1740.10:FF:000004">
    <property type="entry name" value="1-deoxy-D-xylulose 5-phosphate reductoisomerase"/>
    <property type="match status" value="1"/>
</dbReference>
<dbReference type="FunFam" id="3.40.50.720:FF:000045">
    <property type="entry name" value="1-deoxy-D-xylulose 5-phosphate reductoisomerase"/>
    <property type="match status" value="1"/>
</dbReference>
<dbReference type="Gene3D" id="1.10.1740.10">
    <property type="match status" value="1"/>
</dbReference>
<dbReference type="Gene3D" id="3.40.50.720">
    <property type="entry name" value="NAD(P)-binding Rossmann-like Domain"/>
    <property type="match status" value="1"/>
</dbReference>
<dbReference type="HAMAP" id="MF_00183">
    <property type="entry name" value="DXP_reductoisom"/>
    <property type="match status" value="1"/>
</dbReference>
<dbReference type="InterPro" id="IPR003821">
    <property type="entry name" value="DXP_reductoisomerase"/>
</dbReference>
<dbReference type="InterPro" id="IPR013644">
    <property type="entry name" value="DXP_reductoisomerase_C"/>
</dbReference>
<dbReference type="InterPro" id="IPR013512">
    <property type="entry name" value="DXP_reductoisomerase_N"/>
</dbReference>
<dbReference type="InterPro" id="IPR026877">
    <property type="entry name" value="DXPR_C"/>
</dbReference>
<dbReference type="InterPro" id="IPR036169">
    <property type="entry name" value="DXPR_C_sf"/>
</dbReference>
<dbReference type="InterPro" id="IPR036291">
    <property type="entry name" value="NAD(P)-bd_dom_sf"/>
</dbReference>
<dbReference type="NCBIfam" id="TIGR00243">
    <property type="entry name" value="Dxr"/>
    <property type="match status" value="1"/>
</dbReference>
<dbReference type="NCBIfam" id="NF003938">
    <property type="entry name" value="PRK05447.1-1"/>
    <property type="match status" value="1"/>
</dbReference>
<dbReference type="NCBIfam" id="NF009114">
    <property type="entry name" value="PRK12464.1"/>
    <property type="match status" value="1"/>
</dbReference>
<dbReference type="PANTHER" id="PTHR30525">
    <property type="entry name" value="1-DEOXY-D-XYLULOSE 5-PHOSPHATE REDUCTOISOMERASE"/>
    <property type="match status" value="1"/>
</dbReference>
<dbReference type="PANTHER" id="PTHR30525:SF0">
    <property type="entry name" value="1-DEOXY-D-XYLULOSE 5-PHOSPHATE REDUCTOISOMERASE, CHLOROPLASTIC"/>
    <property type="match status" value="1"/>
</dbReference>
<dbReference type="Pfam" id="PF08436">
    <property type="entry name" value="DXP_redisom_C"/>
    <property type="match status" value="1"/>
</dbReference>
<dbReference type="Pfam" id="PF02670">
    <property type="entry name" value="DXP_reductoisom"/>
    <property type="match status" value="1"/>
</dbReference>
<dbReference type="Pfam" id="PF13288">
    <property type="entry name" value="DXPR_C"/>
    <property type="match status" value="1"/>
</dbReference>
<dbReference type="PIRSF" id="PIRSF006205">
    <property type="entry name" value="Dxp_reductismrs"/>
    <property type="match status" value="1"/>
</dbReference>
<dbReference type="SUPFAM" id="SSF69055">
    <property type="entry name" value="1-deoxy-D-xylulose-5-phosphate reductoisomerase, C-terminal domain"/>
    <property type="match status" value="1"/>
</dbReference>
<dbReference type="SUPFAM" id="SSF55347">
    <property type="entry name" value="Glyceraldehyde-3-phosphate dehydrogenase-like, C-terminal domain"/>
    <property type="match status" value="1"/>
</dbReference>
<dbReference type="SUPFAM" id="SSF51735">
    <property type="entry name" value="NAD(P)-binding Rossmann-fold domains"/>
    <property type="match status" value="1"/>
</dbReference>
<feature type="chain" id="PRO_0000163624" description="1-deoxy-D-xylulose 5-phosphate reductoisomerase">
    <location>
        <begin position="1"/>
        <end position="398"/>
    </location>
</feature>
<feature type="binding site" evidence="1">
    <location>
        <position position="11"/>
    </location>
    <ligand>
        <name>NADPH</name>
        <dbReference type="ChEBI" id="CHEBI:57783"/>
    </ligand>
</feature>
<feature type="binding site" evidence="1">
    <location>
        <position position="12"/>
    </location>
    <ligand>
        <name>NADPH</name>
        <dbReference type="ChEBI" id="CHEBI:57783"/>
    </ligand>
</feature>
<feature type="binding site" evidence="1">
    <location>
        <position position="13"/>
    </location>
    <ligand>
        <name>NADPH</name>
        <dbReference type="ChEBI" id="CHEBI:57783"/>
    </ligand>
</feature>
<feature type="binding site" evidence="1">
    <location>
        <position position="14"/>
    </location>
    <ligand>
        <name>NADPH</name>
        <dbReference type="ChEBI" id="CHEBI:57783"/>
    </ligand>
</feature>
<feature type="binding site" evidence="1">
    <location>
        <position position="38"/>
    </location>
    <ligand>
        <name>NADPH</name>
        <dbReference type="ChEBI" id="CHEBI:57783"/>
    </ligand>
</feature>
<feature type="binding site" evidence="1">
    <location>
        <position position="39"/>
    </location>
    <ligand>
        <name>NADPH</name>
        <dbReference type="ChEBI" id="CHEBI:57783"/>
    </ligand>
</feature>
<feature type="binding site" evidence="1">
    <location>
        <position position="125"/>
    </location>
    <ligand>
        <name>NADPH</name>
        <dbReference type="ChEBI" id="CHEBI:57783"/>
    </ligand>
</feature>
<feature type="binding site" evidence="1">
    <location>
        <position position="126"/>
    </location>
    <ligand>
        <name>1-deoxy-D-xylulose 5-phosphate</name>
        <dbReference type="ChEBI" id="CHEBI:57792"/>
    </ligand>
</feature>
<feature type="binding site" evidence="1">
    <location>
        <position position="127"/>
    </location>
    <ligand>
        <name>NADPH</name>
        <dbReference type="ChEBI" id="CHEBI:57783"/>
    </ligand>
</feature>
<feature type="binding site" evidence="1">
    <location>
        <position position="151"/>
    </location>
    <ligand>
        <name>Mn(2+)</name>
        <dbReference type="ChEBI" id="CHEBI:29035"/>
    </ligand>
</feature>
<feature type="binding site" evidence="1">
    <location>
        <position position="152"/>
    </location>
    <ligand>
        <name>1-deoxy-D-xylulose 5-phosphate</name>
        <dbReference type="ChEBI" id="CHEBI:57792"/>
    </ligand>
</feature>
<feature type="binding site" evidence="1">
    <location>
        <position position="153"/>
    </location>
    <ligand>
        <name>1-deoxy-D-xylulose 5-phosphate</name>
        <dbReference type="ChEBI" id="CHEBI:57792"/>
    </ligand>
</feature>
<feature type="binding site" evidence="1">
    <location>
        <position position="153"/>
    </location>
    <ligand>
        <name>Mn(2+)</name>
        <dbReference type="ChEBI" id="CHEBI:29035"/>
    </ligand>
</feature>
<feature type="binding site" evidence="1">
    <location>
        <position position="179"/>
    </location>
    <ligand>
        <name>1-deoxy-D-xylulose 5-phosphate</name>
        <dbReference type="ChEBI" id="CHEBI:57792"/>
    </ligand>
</feature>
<feature type="binding site" evidence="1">
    <location>
        <position position="202"/>
    </location>
    <ligand>
        <name>1-deoxy-D-xylulose 5-phosphate</name>
        <dbReference type="ChEBI" id="CHEBI:57792"/>
    </ligand>
</feature>
<feature type="binding site" evidence="1">
    <location>
        <position position="208"/>
    </location>
    <ligand>
        <name>NADPH</name>
        <dbReference type="ChEBI" id="CHEBI:57783"/>
    </ligand>
</feature>
<feature type="binding site" evidence="1">
    <location>
        <position position="215"/>
    </location>
    <ligand>
        <name>1-deoxy-D-xylulose 5-phosphate</name>
        <dbReference type="ChEBI" id="CHEBI:57792"/>
    </ligand>
</feature>
<feature type="binding site" evidence="1">
    <location>
        <position position="220"/>
    </location>
    <ligand>
        <name>1-deoxy-D-xylulose 5-phosphate</name>
        <dbReference type="ChEBI" id="CHEBI:57792"/>
    </ligand>
</feature>
<feature type="binding site" evidence="1">
    <location>
        <position position="221"/>
    </location>
    <ligand>
        <name>1-deoxy-D-xylulose 5-phosphate</name>
        <dbReference type="ChEBI" id="CHEBI:57792"/>
    </ligand>
</feature>
<feature type="binding site" evidence="1">
    <location>
        <position position="224"/>
    </location>
    <ligand>
        <name>1-deoxy-D-xylulose 5-phosphate</name>
        <dbReference type="ChEBI" id="CHEBI:57792"/>
    </ligand>
</feature>
<feature type="binding site" evidence="1">
    <location>
        <position position="224"/>
    </location>
    <ligand>
        <name>Mn(2+)</name>
        <dbReference type="ChEBI" id="CHEBI:29035"/>
    </ligand>
</feature>
<keyword id="KW-0414">Isoprene biosynthesis</keyword>
<keyword id="KW-0464">Manganese</keyword>
<keyword id="KW-0479">Metal-binding</keyword>
<keyword id="KW-0521">NADP</keyword>
<keyword id="KW-0560">Oxidoreductase</keyword>
<keyword id="KW-1185">Reference proteome</keyword>
<name>DXR_BURMA</name>
<reference key="1">
    <citation type="journal article" date="2004" name="Proc. Natl. Acad. Sci. U.S.A.">
        <title>Structural flexibility in the Burkholderia mallei genome.</title>
        <authorList>
            <person name="Nierman W.C."/>
            <person name="DeShazer D."/>
            <person name="Kim H.S."/>
            <person name="Tettelin H."/>
            <person name="Nelson K.E."/>
            <person name="Feldblyum T.V."/>
            <person name="Ulrich R.L."/>
            <person name="Ronning C.M."/>
            <person name="Brinkac L.M."/>
            <person name="Daugherty S.C."/>
            <person name="Davidsen T.D."/>
            <person name="DeBoy R.T."/>
            <person name="Dimitrov G."/>
            <person name="Dodson R.J."/>
            <person name="Durkin A.S."/>
            <person name="Gwinn M.L."/>
            <person name="Haft D.H."/>
            <person name="Khouri H.M."/>
            <person name="Kolonay J.F."/>
            <person name="Madupu R."/>
            <person name="Mohammoud Y."/>
            <person name="Nelson W.C."/>
            <person name="Radune D."/>
            <person name="Romero C.M."/>
            <person name="Sarria S."/>
            <person name="Selengut J."/>
            <person name="Shamblin C."/>
            <person name="Sullivan S.A."/>
            <person name="White O."/>
            <person name="Yu Y."/>
            <person name="Zafar N."/>
            <person name="Zhou L."/>
            <person name="Fraser C.M."/>
        </authorList>
    </citation>
    <scope>NUCLEOTIDE SEQUENCE [LARGE SCALE GENOMIC DNA]</scope>
    <source>
        <strain>ATCC 23344</strain>
    </source>
</reference>
<accession>Q62JD0</accession>
<comment type="function">
    <text evidence="1">Catalyzes the NADPH-dependent rearrangement and reduction of 1-deoxy-D-xylulose-5-phosphate (DXP) to 2-C-methyl-D-erythritol 4-phosphate (MEP).</text>
</comment>
<comment type="catalytic activity">
    <reaction evidence="1">
        <text>2-C-methyl-D-erythritol 4-phosphate + NADP(+) = 1-deoxy-D-xylulose 5-phosphate + NADPH + H(+)</text>
        <dbReference type="Rhea" id="RHEA:13717"/>
        <dbReference type="ChEBI" id="CHEBI:15378"/>
        <dbReference type="ChEBI" id="CHEBI:57783"/>
        <dbReference type="ChEBI" id="CHEBI:57792"/>
        <dbReference type="ChEBI" id="CHEBI:58262"/>
        <dbReference type="ChEBI" id="CHEBI:58349"/>
        <dbReference type="EC" id="1.1.1.267"/>
    </reaction>
    <physiologicalReaction direction="right-to-left" evidence="1">
        <dbReference type="Rhea" id="RHEA:13719"/>
    </physiologicalReaction>
</comment>
<comment type="cofactor">
    <cofactor evidence="1">
        <name>Mg(2+)</name>
        <dbReference type="ChEBI" id="CHEBI:18420"/>
    </cofactor>
    <cofactor evidence="1">
        <name>Mn(2+)</name>
        <dbReference type="ChEBI" id="CHEBI:29035"/>
    </cofactor>
</comment>
<comment type="pathway">
    <text evidence="1">Isoprenoid biosynthesis; isopentenyl diphosphate biosynthesis via DXP pathway; isopentenyl diphosphate from 1-deoxy-D-xylulose 5-phosphate: step 1/6.</text>
</comment>
<comment type="similarity">
    <text evidence="1">Belongs to the DXR family.</text>
</comment>
<gene>
    <name evidence="1" type="primary">dxr</name>
    <name type="ordered locus">BMA1549</name>
</gene>
<protein>
    <recommendedName>
        <fullName evidence="1">1-deoxy-D-xylulose 5-phosphate reductoisomerase</fullName>
        <shortName evidence="1">DXP reductoisomerase</shortName>
        <ecNumber evidence="1">1.1.1.267</ecNumber>
    </recommendedName>
    <alternativeName>
        <fullName evidence="1">1-deoxyxylulose-5-phosphate reductoisomerase</fullName>
    </alternativeName>
    <alternativeName>
        <fullName evidence="1">2-C-methyl-D-erythritol 4-phosphate synthase</fullName>
    </alternativeName>
</protein>
<sequence>MQKRLTLLGSTGSIGDSTLDVVARHPERFAVHALTAHRNGEKLVAQCLRFAPDVAVVGDAETAARVEAQLRAAGSRTQVAYGKQALVDVSKSDGCDTVVAAIVGAAGLAPSLAAARAGKRILLANKEALVMSGAIFMDAVRDHGAILLPVDSEHNAIFQCMPRDAAEHGGIAKIIVTASGGPFRTREPATLASVTPDEACKHPNWVMGRKISVDSATMMNKGLEVIEAHWLFGLPSEHIDVLIHPQSVIHSLVSYRDGSVLAQLGNPDMRTPIAHALAFPERVDAGVAQLDLAQIATLTFEKPDYARFPCLALAIDALEAGGVASAALNAANEIAVDAFLSRRIRFTAIAQTVGAVLDGLSNRTPGGLDDVIEADAAARRAATAFIGKLPAPGVERAA</sequence>